<geneLocation type="mitochondrion"/>
<evidence type="ECO:0000250" key="1"/>
<evidence type="ECO:0000250" key="2">
    <source>
        <dbReference type="UniProtKB" id="P00157"/>
    </source>
</evidence>
<evidence type="ECO:0000255" key="3">
    <source>
        <dbReference type="PROSITE-ProRule" id="PRU00967"/>
    </source>
</evidence>
<evidence type="ECO:0000255" key="4">
    <source>
        <dbReference type="PROSITE-ProRule" id="PRU00968"/>
    </source>
</evidence>
<accession>O99342</accession>
<name>CYB_KOBEL</name>
<keyword id="KW-0249">Electron transport</keyword>
<keyword id="KW-0349">Heme</keyword>
<keyword id="KW-0408">Iron</keyword>
<keyword id="KW-0472">Membrane</keyword>
<keyword id="KW-0479">Metal-binding</keyword>
<keyword id="KW-0496">Mitochondrion</keyword>
<keyword id="KW-0999">Mitochondrion inner membrane</keyword>
<keyword id="KW-0679">Respiratory chain</keyword>
<keyword id="KW-0812">Transmembrane</keyword>
<keyword id="KW-1133">Transmembrane helix</keyword>
<keyword id="KW-0813">Transport</keyword>
<keyword id="KW-0830">Ubiquinone</keyword>
<organism>
    <name type="scientific">Kobus ellipsiprymnus</name>
    <name type="common">Waterbuck</name>
    <dbReference type="NCBI Taxonomy" id="9962"/>
    <lineage>
        <taxon>Eukaryota</taxon>
        <taxon>Metazoa</taxon>
        <taxon>Chordata</taxon>
        <taxon>Craniata</taxon>
        <taxon>Vertebrata</taxon>
        <taxon>Euteleostomi</taxon>
        <taxon>Mammalia</taxon>
        <taxon>Eutheria</taxon>
        <taxon>Laurasiatheria</taxon>
        <taxon>Artiodactyla</taxon>
        <taxon>Ruminantia</taxon>
        <taxon>Pecora</taxon>
        <taxon>Bovidae</taxon>
        <taxon>Reduncinae</taxon>
        <taxon>Kobus</taxon>
    </lineage>
</organism>
<reference key="1">
    <citation type="journal article" date="1999" name="Mol. Phylogenet. Evol.">
        <title>Cytochrome b phylogeny of the family bovidae: resolution within the alcelaphini, antilopini, neotragini, and tragelaphini.</title>
        <authorList>
            <person name="Matthee C.A."/>
            <person name="Robinson T.J."/>
        </authorList>
    </citation>
    <scope>NUCLEOTIDE SEQUENCE [GENOMIC DNA]</scope>
</reference>
<gene>
    <name type="primary">MT-CYB</name>
    <name type="synonym">COB</name>
    <name type="synonym">CYTB</name>
    <name type="synonym">MTCYB</name>
</gene>
<protein>
    <recommendedName>
        <fullName>Cytochrome b</fullName>
    </recommendedName>
    <alternativeName>
        <fullName>Complex III subunit 3</fullName>
    </alternativeName>
    <alternativeName>
        <fullName>Complex III subunit III</fullName>
    </alternativeName>
    <alternativeName>
        <fullName>Cytochrome b-c1 complex subunit 3</fullName>
    </alternativeName>
    <alternativeName>
        <fullName>Ubiquinol-cytochrome-c reductase complex cytochrome b subunit</fullName>
    </alternativeName>
</protein>
<dbReference type="EMBL" id="AF022059">
    <property type="protein sequence ID" value="AAD13493.1"/>
    <property type="molecule type" value="Genomic_DNA"/>
</dbReference>
<dbReference type="SMR" id="O99342"/>
<dbReference type="GO" id="GO:0005743">
    <property type="term" value="C:mitochondrial inner membrane"/>
    <property type="evidence" value="ECO:0007669"/>
    <property type="project" value="UniProtKB-SubCell"/>
</dbReference>
<dbReference type="GO" id="GO:0045275">
    <property type="term" value="C:respiratory chain complex III"/>
    <property type="evidence" value="ECO:0007669"/>
    <property type="project" value="InterPro"/>
</dbReference>
<dbReference type="GO" id="GO:0046872">
    <property type="term" value="F:metal ion binding"/>
    <property type="evidence" value="ECO:0007669"/>
    <property type="project" value="UniProtKB-KW"/>
</dbReference>
<dbReference type="GO" id="GO:0008121">
    <property type="term" value="F:ubiquinol-cytochrome-c reductase activity"/>
    <property type="evidence" value="ECO:0007669"/>
    <property type="project" value="InterPro"/>
</dbReference>
<dbReference type="GO" id="GO:0006122">
    <property type="term" value="P:mitochondrial electron transport, ubiquinol to cytochrome c"/>
    <property type="evidence" value="ECO:0007669"/>
    <property type="project" value="TreeGrafter"/>
</dbReference>
<dbReference type="CDD" id="cd00290">
    <property type="entry name" value="cytochrome_b_C"/>
    <property type="match status" value="1"/>
</dbReference>
<dbReference type="CDD" id="cd00284">
    <property type="entry name" value="Cytochrome_b_N"/>
    <property type="match status" value="1"/>
</dbReference>
<dbReference type="FunFam" id="1.20.810.10:FF:000002">
    <property type="entry name" value="Cytochrome b"/>
    <property type="match status" value="1"/>
</dbReference>
<dbReference type="Gene3D" id="1.20.810.10">
    <property type="entry name" value="Cytochrome Bc1 Complex, Chain C"/>
    <property type="match status" value="1"/>
</dbReference>
<dbReference type="InterPro" id="IPR005798">
    <property type="entry name" value="Cyt_b/b6_C"/>
</dbReference>
<dbReference type="InterPro" id="IPR036150">
    <property type="entry name" value="Cyt_b/b6_C_sf"/>
</dbReference>
<dbReference type="InterPro" id="IPR005797">
    <property type="entry name" value="Cyt_b/b6_N"/>
</dbReference>
<dbReference type="InterPro" id="IPR027387">
    <property type="entry name" value="Cytb/b6-like_sf"/>
</dbReference>
<dbReference type="InterPro" id="IPR030689">
    <property type="entry name" value="Cytochrome_b"/>
</dbReference>
<dbReference type="InterPro" id="IPR048260">
    <property type="entry name" value="Cytochrome_b_C_euk/bac"/>
</dbReference>
<dbReference type="InterPro" id="IPR048259">
    <property type="entry name" value="Cytochrome_b_N_euk/bac"/>
</dbReference>
<dbReference type="InterPro" id="IPR016174">
    <property type="entry name" value="Di-haem_cyt_TM"/>
</dbReference>
<dbReference type="PANTHER" id="PTHR19271">
    <property type="entry name" value="CYTOCHROME B"/>
    <property type="match status" value="1"/>
</dbReference>
<dbReference type="PANTHER" id="PTHR19271:SF16">
    <property type="entry name" value="CYTOCHROME B"/>
    <property type="match status" value="1"/>
</dbReference>
<dbReference type="Pfam" id="PF00032">
    <property type="entry name" value="Cytochrom_B_C"/>
    <property type="match status" value="1"/>
</dbReference>
<dbReference type="Pfam" id="PF00033">
    <property type="entry name" value="Cytochrome_B"/>
    <property type="match status" value="1"/>
</dbReference>
<dbReference type="PIRSF" id="PIRSF038885">
    <property type="entry name" value="COB"/>
    <property type="match status" value="1"/>
</dbReference>
<dbReference type="SUPFAM" id="SSF81648">
    <property type="entry name" value="a domain/subunit of cytochrome bc1 complex (Ubiquinol-cytochrome c reductase)"/>
    <property type="match status" value="1"/>
</dbReference>
<dbReference type="SUPFAM" id="SSF81342">
    <property type="entry name" value="Transmembrane di-heme cytochromes"/>
    <property type="match status" value="1"/>
</dbReference>
<dbReference type="PROSITE" id="PS51003">
    <property type="entry name" value="CYTB_CTER"/>
    <property type="match status" value="1"/>
</dbReference>
<dbReference type="PROSITE" id="PS51002">
    <property type="entry name" value="CYTB_NTER"/>
    <property type="match status" value="1"/>
</dbReference>
<proteinExistence type="inferred from homology"/>
<feature type="chain" id="PRO_0000061070" description="Cytochrome b">
    <location>
        <begin position="1"/>
        <end position="379"/>
    </location>
</feature>
<feature type="transmembrane region" description="Helical" evidence="2">
    <location>
        <begin position="33"/>
        <end position="53"/>
    </location>
</feature>
<feature type="transmembrane region" description="Helical" evidence="2">
    <location>
        <begin position="77"/>
        <end position="98"/>
    </location>
</feature>
<feature type="transmembrane region" description="Helical" evidence="2">
    <location>
        <begin position="113"/>
        <end position="133"/>
    </location>
</feature>
<feature type="transmembrane region" description="Helical" evidence="2">
    <location>
        <begin position="178"/>
        <end position="198"/>
    </location>
</feature>
<feature type="transmembrane region" description="Helical" evidence="2">
    <location>
        <begin position="226"/>
        <end position="246"/>
    </location>
</feature>
<feature type="transmembrane region" description="Helical" evidence="2">
    <location>
        <begin position="288"/>
        <end position="308"/>
    </location>
</feature>
<feature type="transmembrane region" description="Helical" evidence="2">
    <location>
        <begin position="320"/>
        <end position="340"/>
    </location>
</feature>
<feature type="transmembrane region" description="Helical" evidence="2">
    <location>
        <begin position="347"/>
        <end position="367"/>
    </location>
</feature>
<feature type="binding site" description="axial binding residue" evidence="2">
    <location>
        <position position="83"/>
    </location>
    <ligand>
        <name>heme b</name>
        <dbReference type="ChEBI" id="CHEBI:60344"/>
        <label>b562</label>
    </ligand>
    <ligandPart>
        <name>Fe</name>
        <dbReference type="ChEBI" id="CHEBI:18248"/>
    </ligandPart>
</feature>
<feature type="binding site" description="axial binding residue" evidence="2">
    <location>
        <position position="97"/>
    </location>
    <ligand>
        <name>heme b</name>
        <dbReference type="ChEBI" id="CHEBI:60344"/>
        <label>b566</label>
    </ligand>
    <ligandPart>
        <name>Fe</name>
        <dbReference type="ChEBI" id="CHEBI:18248"/>
    </ligandPart>
</feature>
<feature type="binding site" description="axial binding residue" evidence="2">
    <location>
        <position position="182"/>
    </location>
    <ligand>
        <name>heme b</name>
        <dbReference type="ChEBI" id="CHEBI:60344"/>
        <label>b562</label>
    </ligand>
    <ligandPart>
        <name>Fe</name>
        <dbReference type="ChEBI" id="CHEBI:18248"/>
    </ligandPart>
</feature>
<feature type="binding site" description="axial binding residue" evidence="2">
    <location>
        <position position="196"/>
    </location>
    <ligand>
        <name>heme b</name>
        <dbReference type="ChEBI" id="CHEBI:60344"/>
        <label>b566</label>
    </ligand>
    <ligandPart>
        <name>Fe</name>
        <dbReference type="ChEBI" id="CHEBI:18248"/>
    </ligandPart>
</feature>
<feature type="binding site" evidence="2">
    <location>
        <position position="201"/>
    </location>
    <ligand>
        <name>a ubiquinone</name>
        <dbReference type="ChEBI" id="CHEBI:16389"/>
    </ligand>
</feature>
<sequence length="379" mass="42618">MTNVQKTHPLMKIVNNAFIDLPAPSNISSWWNFGSLLGICLVLQILTGLFLAMHYTSDTTTAFSSVTHICRDVNYGWIIRYMHANGASMFFICLFMHVGRGLYYGSYIFLETWNIGVVLLFTTMATAFMGYVLPWGQMSFWGATVITNLLSAIPYIGTNLVEWIWGGFSVDKATLTRFFAFHFILPFIIAAITMVHLLFLHETGSNNPTGISSDMDKIPFHPYYTIKDILGALLLILVLMLLVLFAPDLLGDPDNYAPANPLNTPLTIKPEWYFLFAYAILRSIPNKLGGVLALVLSILILVLMPLLHTSKQRSMMFRPISQCLFWILVADLLTLTWIGGQPVEHPYIIIGQLASIMYFLLILVLMPTASTIGNNLLEW</sequence>
<comment type="function">
    <text evidence="2">Component of the ubiquinol-cytochrome c reductase complex (complex III or cytochrome b-c1 complex) that is part of the mitochondrial respiratory chain. The b-c1 complex mediates electron transfer from ubiquinol to cytochrome c. Contributes to the generation of a proton gradient across the mitochondrial membrane that is then used for ATP synthesis.</text>
</comment>
<comment type="cofactor">
    <cofactor evidence="2">
        <name>heme b</name>
        <dbReference type="ChEBI" id="CHEBI:60344"/>
    </cofactor>
    <text evidence="2">Binds 2 heme b groups non-covalently.</text>
</comment>
<comment type="subunit">
    <text evidence="2">The cytochrome bc1 complex contains 11 subunits: 3 respiratory subunits (MT-CYB, CYC1 and UQCRFS1), 2 core proteins (UQCRC1 and UQCRC2) and 6 low-molecular weight proteins (UQCRH/QCR6, UQCRB/QCR7, UQCRQ/QCR8, UQCR10/QCR9, UQCR11/QCR10 and a cleavage product of UQCRFS1). This cytochrome bc1 complex then forms a dimer.</text>
</comment>
<comment type="subcellular location">
    <subcellularLocation>
        <location evidence="2">Mitochondrion inner membrane</location>
        <topology evidence="2">Multi-pass membrane protein</topology>
    </subcellularLocation>
</comment>
<comment type="miscellaneous">
    <text evidence="1">Heme 1 (or BL or b562) is low-potential and absorbs at about 562 nm, and heme 2 (or BH or b566) is high-potential and absorbs at about 566 nm.</text>
</comment>
<comment type="similarity">
    <text evidence="3 4">Belongs to the cytochrome b family.</text>
</comment>
<comment type="caution">
    <text evidence="2">The full-length protein contains only eight transmembrane helices, not nine as predicted by bioinformatics tools.</text>
</comment>